<sequence>MSWYEKYNIVLNPPKRCFSSCADNLTTILAEDGNNIRAILYSQPQKLKVLQDFLATSRNKMFLYKILDDEIRRVLT</sequence>
<proteinExistence type="evidence at transcript level"/>
<keyword id="KW-1015">Disulfide bond</keyword>
<keyword id="KW-0426">Late protein</keyword>
<keyword id="KW-0676">Redox-active center</keyword>
<keyword id="KW-1185">Reference proteome</keyword>
<accession>Q07032</accession>
<accession>Q9QNI1</accession>
<gene>
    <name type="primary">OPG128</name>
    <name type="ORF">A2.5L</name>
</gene>
<evidence type="ECO:0000250" key="1">
    <source>
        <dbReference type="UniProtKB" id="P07608"/>
    </source>
</evidence>
<evidence type="ECO:0000255" key="2"/>
<evidence type="ECO:0000305" key="3"/>
<organism>
    <name type="scientific">Variola virus (isolate Human/India/Ind3/1967)</name>
    <name type="common">VARV</name>
    <name type="synonym">Smallpox virus</name>
    <dbReference type="NCBI Taxonomy" id="587200"/>
    <lineage>
        <taxon>Viruses</taxon>
        <taxon>Varidnaviria</taxon>
        <taxon>Bamfordvirae</taxon>
        <taxon>Nucleocytoviricota</taxon>
        <taxon>Pokkesviricetes</taxon>
        <taxon>Chitovirales</taxon>
        <taxon>Poxviridae</taxon>
        <taxon>Chordopoxvirinae</taxon>
        <taxon>Orthopoxvirus</taxon>
        <taxon>Variola virus</taxon>
    </lineage>
</organism>
<reference key="1">
    <citation type="journal article" date="1993" name="FEBS Lett.">
        <title>Genes of variola and vaccinia viruses necessary to overcome the host protective mechanisms.</title>
        <authorList>
            <person name="Shchelkunov S.N."/>
            <person name="Blinov V.M."/>
            <person name="Sandakhchiev L.S."/>
        </authorList>
    </citation>
    <scope>NUCLEOTIDE SEQUENCE [LARGE SCALE GENOMIC DNA]</scope>
</reference>
<reference key="2">
    <citation type="journal article" date="1994" name="Virus Res.">
        <title>Analysis of the nucleotide sequence of 53 kbp from the right terminus of the genome of variola major virus strain India-1967.</title>
        <authorList>
            <person name="Shchelkunov S.N."/>
            <person name="Blinov V.M."/>
            <person name="Resenchuk S.M."/>
            <person name="Totmenin A.V."/>
            <person name="Olenina L.V."/>
            <person name="Chirikova G.B."/>
            <person name="Sandakhchiev L.S."/>
        </authorList>
    </citation>
    <scope>NUCLEOTIDE SEQUENCE [GENOMIC DNA]</scope>
</reference>
<reference key="3">
    <citation type="journal article" date="1995" name="Virus Genes">
        <title>Two types of deletions in orthopoxvirus genomes.</title>
        <authorList>
            <person name="Shchelkunov S.N."/>
            <person name="Totmenin A.V."/>
        </authorList>
    </citation>
    <scope>NUCLEOTIDE SEQUENCE [GENOMIC DNA]</scope>
</reference>
<reference key="4">
    <citation type="journal article" date="1996" name="Virus Res.">
        <title>Analysis of the nucleotide sequence of 23.8 kbp from the left terminus of the genome of variola major virus strain India-1967.</title>
        <authorList>
            <person name="Shchelkunov S.N."/>
            <person name="Totmenin A.V."/>
            <person name="Sandakhchiev L.S."/>
        </authorList>
    </citation>
    <scope>NUCLEOTIDE SEQUENCE [GENOMIC DNA]</scope>
</reference>
<dbReference type="EMBL" id="X69198">
    <property type="protein sequence ID" value="CAA49047.1"/>
    <property type="molecule type" value="Genomic_DNA"/>
</dbReference>
<dbReference type="PIR" id="H72163">
    <property type="entry name" value="H72163"/>
</dbReference>
<dbReference type="PIR" id="T28544">
    <property type="entry name" value="T28544"/>
</dbReference>
<dbReference type="KEGG" id="vg:1486507"/>
<dbReference type="Proteomes" id="UP000002060">
    <property type="component" value="Segment"/>
</dbReference>
<dbReference type="InterPro" id="IPR007952">
    <property type="entry name" value="Poxvirus_A2.5L"/>
</dbReference>
<dbReference type="Pfam" id="PF05288">
    <property type="entry name" value="Pox_A3L"/>
    <property type="match status" value="1"/>
</dbReference>
<organismHost>
    <name type="scientific">Homo sapiens</name>
    <name type="common">Human</name>
    <dbReference type="NCBI Taxonomy" id="9606"/>
</organismHost>
<protein>
    <recommendedName>
        <fullName>Protein OPG128</fullName>
    </recommendedName>
</protein>
<feature type="chain" id="PRO_0000411965" description="Protein OPG128">
    <location>
        <begin position="1"/>
        <end position="76"/>
    </location>
</feature>
<feature type="disulfide bond" description="Redox-active" evidence="2">
    <location>
        <begin position="17"/>
        <end position="21"/>
    </location>
</feature>
<comment type="function">
    <text evidence="1">Late protein which probably participates in disulfide bond formation by functioning as a thiol-disulfide transfer protein between membrane-associated OPG072 and OPG08. The complete pathway for formation of disulfide bonds in intracellular virion membrane proteins sequentially involves oxidation of OPG072, OPG128 and OPG08.</text>
</comment>
<comment type="subunit">
    <text evidence="1">Interacts with sulfhydryl oxidase OPG072; this interaction involves formation of a transient disulfide-bonded intermediate, allowing disulfide bond transfer. Interacts with OPG088; this interaction involves formation of a transient disulfide-bonded intermediate, allowing disulfide bond transfer.</text>
</comment>
<comment type="induction">
    <text>Expressed in the late phase of the viral replicative cycle.</text>
</comment>
<comment type="similarity">
    <text evidence="3">Belongs to the orthopoxvirus OPG128 family.</text>
</comment>
<name>PG128_VAR67</name>